<protein>
    <recommendedName>
        <fullName evidence="1">1-deoxy-D-xylulose-5-phosphate synthase</fullName>
        <ecNumber evidence="1">2.2.1.7</ecNumber>
    </recommendedName>
    <alternativeName>
        <fullName evidence="1">1-deoxyxylulose-5-phosphate synthase</fullName>
        <shortName evidence="1">DXP synthase</shortName>
        <shortName evidence="1">DXPS</shortName>
    </alternativeName>
</protein>
<gene>
    <name evidence="1" type="primary">dxs</name>
    <name type="ordered locus">Lxx10450</name>
</gene>
<proteinExistence type="inferred from homology"/>
<evidence type="ECO:0000255" key="1">
    <source>
        <dbReference type="HAMAP-Rule" id="MF_00315"/>
    </source>
</evidence>
<keyword id="KW-0414">Isoprene biosynthesis</keyword>
<keyword id="KW-0460">Magnesium</keyword>
<keyword id="KW-0479">Metal-binding</keyword>
<keyword id="KW-1185">Reference proteome</keyword>
<keyword id="KW-0784">Thiamine biosynthesis</keyword>
<keyword id="KW-0786">Thiamine pyrophosphate</keyword>
<keyword id="KW-0808">Transferase</keyword>
<feature type="chain" id="PRO_0000189123" description="1-deoxy-D-xylulose-5-phosphate synthase">
    <location>
        <begin position="1"/>
        <end position="650"/>
    </location>
</feature>
<feature type="binding site" evidence="1">
    <location>
        <position position="73"/>
    </location>
    <ligand>
        <name>thiamine diphosphate</name>
        <dbReference type="ChEBI" id="CHEBI:58937"/>
    </ligand>
</feature>
<feature type="binding site" evidence="1">
    <location>
        <begin position="113"/>
        <end position="115"/>
    </location>
    <ligand>
        <name>thiamine diphosphate</name>
        <dbReference type="ChEBI" id="CHEBI:58937"/>
    </ligand>
</feature>
<feature type="binding site" evidence="1">
    <location>
        <position position="145"/>
    </location>
    <ligand>
        <name>Mg(2+)</name>
        <dbReference type="ChEBI" id="CHEBI:18420"/>
    </ligand>
</feature>
<feature type="binding site" evidence="1">
    <location>
        <begin position="146"/>
        <end position="147"/>
    </location>
    <ligand>
        <name>thiamine diphosphate</name>
        <dbReference type="ChEBI" id="CHEBI:58937"/>
    </ligand>
</feature>
<feature type="binding site" evidence="1">
    <location>
        <position position="175"/>
    </location>
    <ligand>
        <name>Mg(2+)</name>
        <dbReference type="ChEBI" id="CHEBI:18420"/>
    </ligand>
</feature>
<feature type="binding site" evidence="1">
    <location>
        <position position="175"/>
    </location>
    <ligand>
        <name>thiamine diphosphate</name>
        <dbReference type="ChEBI" id="CHEBI:58937"/>
    </ligand>
</feature>
<feature type="binding site" evidence="1">
    <location>
        <position position="287"/>
    </location>
    <ligand>
        <name>thiamine diphosphate</name>
        <dbReference type="ChEBI" id="CHEBI:58937"/>
    </ligand>
</feature>
<feature type="binding site" evidence="1">
    <location>
        <position position="369"/>
    </location>
    <ligand>
        <name>thiamine diphosphate</name>
        <dbReference type="ChEBI" id="CHEBI:58937"/>
    </ligand>
</feature>
<name>DXS_LEIXX</name>
<organism>
    <name type="scientific">Leifsonia xyli subsp. xyli (strain CTCB07)</name>
    <dbReference type="NCBI Taxonomy" id="281090"/>
    <lineage>
        <taxon>Bacteria</taxon>
        <taxon>Bacillati</taxon>
        <taxon>Actinomycetota</taxon>
        <taxon>Actinomycetes</taxon>
        <taxon>Micrococcales</taxon>
        <taxon>Microbacteriaceae</taxon>
        <taxon>Leifsonia</taxon>
    </lineage>
</organism>
<comment type="function">
    <text evidence="1">Catalyzes the acyloin condensation reaction between C atoms 2 and 3 of pyruvate and glyceraldehyde 3-phosphate to yield 1-deoxy-D-xylulose-5-phosphate (DXP).</text>
</comment>
<comment type="catalytic activity">
    <reaction evidence="1">
        <text>D-glyceraldehyde 3-phosphate + pyruvate + H(+) = 1-deoxy-D-xylulose 5-phosphate + CO2</text>
        <dbReference type="Rhea" id="RHEA:12605"/>
        <dbReference type="ChEBI" id="CHEBI:15361"/>
        <dbReference type="ChEBI" id="CHEBI:15378"/>
        <dbReference type="ChEBI" id="CHEBI:16526"/>
        <dbReference type="ChEBI" id="CHEBI:57792"/>
        <dbReference type="ChEBI" id="CHEBI:59776"/>
        <dbReference type="EC" id="2.2.1.7"/>
    </reaction>
</comment>
<comment type="cofactor">
    <cofactor evidence="1">
        <name>Mg(2+)</name>
        <dbReference type="ChEBI" id="CHEBI:18420"/>
    </cofactor>
    <text evidence="1">Binds 1 Mg(2+) ion per subunit.</text>
</comment>
<comment type="cofactor">
    <cofactor evidence="1">
        <name>thiamine diphosphate</name>
        <dbReference type="ChEBI" id="CHEBI:58937"/>
    </cofactor>
    <text evidence="1">Binds 1 thiamine pyrophosphate per subunit.</text>
</comment>
<comment type="pathway">
    <text evidence="1">Metabolic intermediate biosynthesis; 1-deoxy-D-xylulose 5-phosphate biosynthesis; 1-deoxy-D-xylulose 5-phosphate from D-glyceraldehyde 3-phosphate and pyruvate: step 1/1.</text>
</comment>
<comment type="subunit">
    <text evidence="1">Homodimer.</text>
</comment>
<comment type="similarity">
    <text evidence="1">Belongs to the transketolase family. DXPS subfamily.</text>
</comment>
<dbReference type="EC" id="2.2.1.7" evidence="1"/>
<dbReference type="EMBL" id="AE016822">
    <property type="protein sequence ID" value="AAT88910.1"/>
    <property type="molecule type" value="Genomic_DNA"/>
</dbReference>
<dbReference type="RefSeq" id="WP_011185906.1">
    <property type="nucleotide sequence ID" value="NC_006087.1"/>
</dbReference>
<dbReference type="SMR" id="Q6AFD5"/>
<dbReference type="STRING" id="281090.Lxx10450"/>
<dbReference type="KEGG" id="lxx:Lxx10450"/>
<dbReference type="eggNOG" id="COG1154">
    <property type="taxonomic scope" value="Bacteria"/>
</dbReference>
<dbReference type="HOGENOM" id="CLU_009227_1_4_11"/>
<dbReference type="UniPathway" id="UPA00064">
    <property type="reaction ID" value="UER00091"/>
</dbReference>
<dbReference type="Proteomes" id="UP000001306">
    <property type="component" value="Chromosome"/>
</dbReference>
<dbReference type="GO" id="GO:0005829">
    <property type="term" value="C:cytosol"/>
    <property type="evidence" value="ECO:0007669"/>
    <property type="project" value="TreeGrafter"/>
</dbReference>
<dbReference type="GO" id="GO:0008661">
    <property type="term" value="F:1-deoxy-D-xylulose-5-phosphate synthase activity"/>
    <property type="evidence" value="ECO:0007669"/>
    <property type="project" value="UniProtKB-UniRule"/>
</dbReference>
<dbReference type="GO" id="GO:0000287">
    <property type="term" value="F:magnesium ion binding"/>
    <property type="evidence" value="ECO:0007669"/>
    <property type="project" value="UniProtKB-UniRule"/>
</dbReference>
<dbReference type="GO" id="GO:0030976">
    <property type="term" value="F:thiamine pyrophosphate binding"/>
    <property type="evidence" value="ECO:0007669"/>
    <property type="project" value="UniProtKB-UniRule"/>
</dbReference>
<dbReference type="GO" id="GO:0052865">
    <property type="term" value="P:1-deoxy-D-xylulose 5-phosphate biosynthetic process"/>
    <property type="evidence" value="ECO:0007669"/>
    <property type="project" value="UniProtKB-UniPathway"/>
</dbReference>
<dbReference type="GO" id="GO:0019288">
    <property type="term" value="P:isopentenyl diphosphate biosynthetic process, methylerythritol 4-phosphate pathway"/>
    <property type="evidence" value="ECO:0007669"/>
    <property type="project" value="TreeGrafter"/>
</dbReference>
<dbReference type="GO" id="GO:0016114">
    <property type="term" value="P:terpenoid biosynthetic process"/>
    <property type="evidence" value="ECO:0007669"/>
    <property type="project" value="UniProtKB-UniRule"/>
</dbReference>
<dbReference type="GO" id="GO:0009228">
    <property type="term" value="P:thiamine biosynthetic process"/>
    <property type="evidence" value="ECO:0007669"/>
    <property type="project" value="UniProtKB-UniRule"/>
</dbReference>
<dbReference type="CDD" id="cd02007">
    <property type="entry name" value="TPP_DXS"/>
    <property type="match status" value="1"/>
</dbReference>
<dbReference type="CDD" id="cd07033">
    <property type="entry name" value="TPP_PYR_DXS_TK_like"/>
    <property type="match status" value="1"/>
</dbReference>
<dbReference type="FunFam" id="3.40.50.970:FF:000005">
    <property type="entry name" value="1-deoxy-D-xylulose-5-phosphate synthase"/>
    <property type="match status" value="1"/>
</dbReference>
<dbReference type="Gene3D" id="3.40.50.920">
    <property type="match status" value="1"/>
</dbReference>
<dbReference type="Gene3D" id="3.40.50.970">
    <property type="match status" value="2"/>
</dbReference>
<dbReference type="HAMAP" id="MF_00315">
    <property type="entry name" value="DXP_synth"/>
    <property type="match status" value="1"/>
</dbReference>
<dbReference type="InterPro" id="IPR005477">
    <property type="entry name" value="Dxylulose-5-P_synthase"/>
</dbReference>
<dbReference type="InterPro" id="IPR029061">
    <property type="entry name" value="THDP-binding"/>
</dbReference>
<dbReference type="InterPro" id="IPR009014">
    <property type="entry name" value="Transketo_C/PFOR_II"/>
</dbReference>
<dbReference type="InterPro" id="IPR005475">
    <property type="entry name" value="Transketolase-like_Pyr-bd"/>
</dbReference>
<dbReference type="InterPro" id="IPR020826">
    <property type="entry name" value="Transketolase_BS"/>
</dbReference>
<dbReference type="InterPro" id="IPR033248">
    <property type="entry name" value="Transketolase_C"/>
</dbReference>
<dbReference type="NCBIfam" id="TIGR00204">
    <property type="entry name" value="dxs"/>
    <property type="match status" value="1"/>
</dbReference>
<dbReference type="NCBIfam" id="NF003933">
    <property type="entry name" value="PRK05444.2-2"/>
    <property type="match status" value="1"/>
</dbReference>
<dbReference type="PANTHER" id="PTHR43322">
    <property type="entry name" value="1-D-DEOXYXYLULOSE 5-PHOSPHATE SYNTHASE-RELATED"/>
    <property type="match status" value="1"/>
</dbReference>
<dbReference type="PANTHER" id="PTHR43322:SF5">
    <property type="entry name" value="1-DEOXY-D-XYLULOSE-5-PHOSPHATE SYNTHASE, CHLOROPLASTIC"/>
    <property type="match status" value="1"/>
</dbReference>
<dbReference type="Pfam" id="PF13292">
    <property type="entry name" value="DXP_synthase_N"/>
    <property type="match status" value="1"/>
</dbReference>
<dbReference type="Pfam" id="PF02779">
    <property type="entry name" value="Transket_pyr"/>
    <property type="match status" value="1"/>
</dbReference>
<dbReference type="Pfam" id="PF02780">
    <property type="entry name" value="Transketolase_C"/>
    <property type="match status" value="1"/>
</dbReference>
<dbReference type="SMART" id="SM00861">
    <property type="entry name" value="Transket_pyr"/>
    <property type="match status" value="1"/>
</dbReference>
<dbReference type="SUPFAM" id="SSF52518">
    <property type="entry name" value="Thiamin diphosphate-binding fold (THDP-binding)"/>
    <property type="match status" value="2"/>
</dbReference>
<dbReference type="SUPFAM" id="SSF52922">
    <property type="entry name" value="TK C-terminal domain-like"/>
    <property type="match status" value="1"/>
</dbReference>
<dbReference type="PROSITE" id="PS00802">
    <property type="entry name" value="TRANSKETOLASE_2"/>
    <property type="match status" value="1"/>
</dbReference>
<reference key="1">
    <citation type="journal article" date="2004" name="Mol. Plant Microbe Interact.">
        <title>The genome sequence of the Gram-positive sugarcane pathogen Leifsonia xyli subsp. xyli.</title>
        <authorList>
            <person name="Monteiro-Vitorello C.B."/>
            <person name="Camargo L.E.A."/>
            <person name="Van Sluys M.A."/>
            <person name="Kitajima J.P."/>
            <person name="Truffi D."/>
            <person name="do Amaral A.M."/>
            <person name="Harakava R."/>
            <person name="de Oliveira J.C.F."/>
            <person name="Wood D."/>
            <person name="de Oliveira M.C."/>
            <person name="Miyaki C.Y."/>
            <person name="Takita M.A."/>
            <person name="da Silva A.C.R."/>
            <person name="Furlan L.R."/>
            <person name="Carraro D.M."/>
            <person name="Camarotte G."/>
            <person name="Almeida N.F. Jr."/>
            <person name="Carrer H."/>
            <person name="Coutinho L.L."/>
            <person name="El-Dorry H.A."/>
            <person name="Ferro M.I.T."/>
            <person name="Gagliardi P.R."/>
            <person name="Giglioti E."/>
            <person name="Goldman M.H.S."/>
            <person name="Goldman G.H."/>
            <person name="Kimura E.T."/>
            <person name="Ferro E.S."/>
            <person name="Kuramae E.E."/>
            <person name="Lemos E.G.M."/>
            <person name="Lemos M.V.F."/>
            <person name="Mauro S.M.Z."/>
            <person name="Machado M.A."/>
            <person name="Marino C.L."/>
            <person name="Menck C.F."/>
            <person name="Nunes L.R."/>
            <person name="Oliveira R.C."/>
            <person name="Pereira G.G."/>
            <person name="Siqueira W."/>
            <person name="de Souza A.A."/>
            <person name="Tsai S.M."/>
            <person name="Zanca A.S."/>
            <person name="Simpson A.J.G."/>
            <person name="Brumbley S.M."/>
            <person name="Setubal J.C."/>
        </authorList>
    </citation>
    <scope>NUCLEOTIDE SEQUENCE [LARGE SCALE GENOMIC DNA]</scope>
    <source>
        <strain>CTCB07</strain>
    </source>
</reference>
<sequence length="650" mass="70389">MSILESVHGPRDLDRLTERELDQLAAEVRAFLVANVAKTGGHLGPNLGVVETTIAIHRVFDSPRDAIVFDTGHQSYVHKLLTGRQDFSRLRQKGGLAGYPQRSESEHDIVESSHASSSLSWADGISRAFEMTGQDDRHVVAVVGDGALTGGMTWEALNNISDDNNRRLIIVVNDNGRSYAPTIGGMARFLNTVRTRRSYRSLYLTSRKAFEKLGGPGQSLYRGIRGGLHGFLSRFSDNEALYSNLDIKYIGPVHGHDIGAMEEALRQAKNYGAPVIVHAITQKGRGYEPALRDIADQFHAVGQIDPETGDPIGSPAKPNWTGVFAEEIVALAEENPKLVGITAAMLRPTGLHRFAERFPDRVYDVGIAEQHAVTSAAGLAFGGLHPVVAIYATFMNRAFDQVLMDVALHKAGVTFVLDRAGVTGPDGPSHHGIWDLAILQVVPGIRLAAPRDATRFREELAEAVAVADAPTVLRFPKGSVPADIEAVRRRDDGVDVLHESDQKDVLLVTVGPMAGLGLRVAEALAAQGIGATVVDPRWVVPVPRSVLDLAAGHRIVVTMEDGIRVGGIGTRVRQDLREAGIDTAVDELGLPDEFIDHATRDEILDDAGLTPQKIARDLVAQVLGSRVPIARPLPVEEFTEPSPERKKRRA</sequence>
<accession>Q6AFD5</accession>